<reference key="1">
    <citation type="journal article" date="2001" name="Virology">
        <title>Sequences and replication of genomes of the archaeal rudiviruses SIRV1 and SIRV2: relationships to the archaeal lipothrixvirus SIFV and some eukaryal viruses.</title>
        <authorList>
            <person name="Peng X."/>
            <person name="Blum H."/>
            <person name="She Q."/>
            <person name="Mallok S."/>
            <person name="Bruegger K."/>
            <person name="Garrett R.A."/>
            <person name="Zillig W."/>
            <person name="Prangishvili D."/>
        </authorList>
    </citation>
    <scope>NUCLEOTIDE SEQUENCE [GENOMIC DNA]</scope>
    <source>
        <strain evidence="5">HVE10/4</strain>
    </source>
</reference>
<reference key="2">
    <citation type="journal article" date="2020" name="Proc. Natl. Acad. Sci. U.S.A.">
        <title>Structures of filamentous viruses infecting hyperthermophilic archaea explain DNA stabilization in extreme environments.</title>
        <authorList>
            <person name="Wang F."/>
            <person name="Baquero D.P."/>
            <person name="Beltran L.C."/>
            <person name="Su Z."/>
            <person name="Osinski T."/>
            <person name="Zheng W."/>
            <person name="Prangishvili D."/>
            <person name="Krupovic M."/>
            <person name="Egelman E.H."/>
        </authorList>
    </citation>
    <scope>SUBUNIT</scope>
    <scope>FUNCTION</scope>
</reference>
<reference evidence="6" key="3">
    <citation type="journal article" date="2015" name="Science">
        <title>Virology. A virus that infects a hyperthermophile encapsidates A-form DNA.</title>
        <authorList>
            <person name="DiMaio F."/>
            <person name="Yu X."/>
            <person name="Rensen E."/>
            <person name="Krupovic M."/>
            <person name="Prangishvili D."/>
            <person name="Egelman E.H."/>
        </authorList>
    </citation>
    <scope>STRUCTURE BY ELECTRON MICROSCOPY (3.80 ANGSTROMS) OF 7-134</scope>
    <scope>FUNCTION</scope>
    <scope>SUBUNIT</scope>
    <scope>SUBCELLULAR LOCATION</scope>
</reference>
<evidence type="ECO:0000269" key="1">
    <source>
    </source>
</evidence>
<evidence type="ECO:0000269" key="2">
    <source>
    </source>
</evidence>
<evidence type="ECO:0000305" key="3">
    <source>
    </source>
</evidence>
<evidence type="ECO:0000305" key="4">
    <source>
    </source>
</evidence>
<evidence type="ECO:0000312" key="5">
    <source>
        <dbReference type="EMBL" id="CAC87301.1"/>
    </source>
</evidence>
<evidence type="ECO:0007744" key="6">
    <source>
        <dbReference type="PDB" id="3J9X"/>
    </source>
</evidence>
<accession>Q8V9P2</accession>
<sequence length="134" mass="14376">MAKGHTSRSYSQRYAKWQAKFNAFSNPTVASTILSNVSPVAQQNFQTNVPKFTSVNENVSAVLTQYGITGPNRAIYQGFGLKVARALNRIGSGPALVNMINGLKGYYISAFNANPQVLDAVVNIITGSPTGYVS</sequence>
<organismHost>
    <name type="scientific">Saccharolobus islandicus</name>
    <name type="common">Sulfolobus islandicus</name>
    <dbReference type="NCBI Taxonomy" id="43080"/>
</organismHost>
<dbReference type="EMBL" id="AJ344259">
    <property type="protein sequence ID" value="CAC87301.1"/>
    <property type="molecule type" value="Genomic_DNA"/>
</dbReference>
<dbReference type="RefSeq" id="NP_666560.1">
    <property type="nucleotide sequence ID" value="NC_004086.1"/>
</dbReference>
<dbReference type="PDB" id="3J9X">
    <property type="method" value="EM"/>
    <property type="resolution" value="3.80 A"/>
    <property type="chains" value="1/2/3/4/5/6/A/B/C/D/E/F/G/H/I/J/K/L/M/N/O/P/Q/R/S/T/U/V/W/X=7-134"/>
</dbReference>
<dbReference type="PDBsum" id="3J9X"/>
<dbReference type="SMR" id="Q8V9P2"/>
<dbReference type="DIP" id="DIP-61651N"/>
<dbReference type="GeneID" id="951446"/>
<dbReference type="KEGG" id="vg:951446"/>
<dbReference type="OrthoDB" id="14070at10239"/>
<dbReference type="EvolutionaryTrace" id="Q8V9P2"/>
<dbReference type="Proteomes" id="UP000002271">
    <property type="component" value="Genome"/>
</dbReference>
<dbReference type="GO" id="GO:0019029">
    <property type="term" value="C:helical viral capsid"/>
    <property type="evidence" value="ECO:0000314"/>
    <property type="project" value="UniProtKB"/>
</dbReference>
<dbReference type="GO" id="GO:0003677">
    <property type="term" value="F:DNA binding"/>
    <property type="evidence" value="ECO:0000314"/>
    <property type="project" value="UniProtKB"/>
</dbReference>
<dbReference type="Gene3D" id="1.20.58.800">
    <property type="match status" value="1"/>
</dbReference>
<dbReference type="InterPro" id="IPR022014">
    <property type="entry name" value="Sulfobus_virus_coat_C"/>
</dbReference>
<dbReference type="Pfam" id="PF12193">
    <property type="entry name" value="Sulf_coat_C"/>
    <property type="match status" value="1"/>
</dbReference>
<protein>
    <recommendedName>
        <fullName>Major capsid protein</fullName>
    </recommendedName>
</protein>
<feature type="chain" id="PRO_0000453806" description="Major capsid protein">
    <location>
        <begin position="1"/>
        <end position="134"/>
    </location>
</feature>
<comment type="function">
    <text evidence="1 3 4">Self-assembles to form a helical, filamentous nucleocapsid (PubMed:25999507). The capsid proteins wrap around the DNA and maintain it in an A-form by non-specific desolvation and specific coordination of the DNA phosphate groups by positively charged residues (Probable) (PubMed:25999507). This certainly protects the viral DNA under conditions such as the extreme desiccation of its host (Probable).</text>
</comment>
<comment type="subunit">
    <text evidence="1 2">Homodimer.</text>
</comment>
<comment type="subcellular location">
    <subcellularLocation>
        <location evidence="1">Virion</location>
    </subcellularLocation>
</comment>
<name>CAPSD_SIRV2</name>
<organism>
    <name type="scientific">Sulfolobus islandicus rod-shaped virus 2</name>
    <name type="common">SIRV2</name>
    <name type="synonym">Sulfolobus virus SIRV-2</name>
    <dbReference type="NCBI Taxonomy" id="157899"/>
    <lineage>
        <taxon>Viruses</taxon>
        <taxon>Adnaviria</taxon>
        <taxon>Zilligvirae</taxon>
        <taxon>Taleaviricota</taxon>
        <taxon>Tokiviricetes</taxon>
        <taxon>Ligamenvirales</taxon>
        <taxon>Rudiviridae</taxon>
        <taxon>Icerudivirus</taxon>
        <taxon>Icerudivirus SIRV2</taxon>
    </lineage>
</organism>
<keyword id="KW-0002">3D-structure</keyword>
<keyword id="KW-0238">DNA-binding</keyword>
<keyword id="KW-0946">Virion</keyword>
<proteinExistence type="evidence at protein level"/>